<feature type="chain" id="PRO_1000089198" description="Endoribonuclease YbeY">
    <location>
        <begin position="1"/>
        <end position="157"/>
    </location>
</feature>
<feature type="binding site" evidence="1">
    <location>
        <position position="111"/>
    </location>
    <ligand>
        <name>Zn(2+)</name>
        <dbReference type="ChEBI" id="CHEBI:29105"/>
        <note>catalytic</note>
    </ligand>
</feature>
<feature type="binding site" evidence="1">
    <location>
        <position position="115"/>
    </location>
    <ligand>
        <name>Zn(2+)</name>
        <dbReference type="ChEBI" id="CHEBI:29105"/>
        <note>catalytic</note>
    </ligand>
</feature>
<feature type="binding site" evidence="1">
    <location>
        <position position="121"/>
    </location>
    <ligand>
        <name>Zn(2+)</name>
        <dbReference type="ChEBI" id="CHEBI:29105"/>
        <note>catalytic</note>
    </ligand>
</feature>
<organism>
    <name type="scientific">Pseudomonas putida (strain W619)</name>
    <dbReference type="NCBI Taxonomy" id="390235"/>
    <lineage>
        <taxon>Bacteria</taxon>
        <taxon>Pseudomonadati</taxon>
        <taxon>Pseudomonadota</taxon>
        <taxon>Gammaproteobacteria</taxon>
        <taxon>Pseudomonadales</taxon>
        <taxon>Pseudomonadaceae</taxon>
        <taxon>Pseudomonas</taxon>
    </lineage>
</organism>
<protein>
    <recommendedName>
        <fullName evidence="1">Endoribonuclease YbeY</fullName>
        <ecNumber evidence="1">3.1.-.-</ecNumber>
    </recommendedName>
</protein>
<name>YBEY_PSEPW</name>
<sequence length="157" mass="17659">MLELDLQRATDAATPDDAALRAWCELALRQRSADSEMTIRLVDEAEGRELNHTYRHKDYATNVLSFPADVPDELLDIPLLGDLVICVPVVEREAAEQGKSLQAHWAHLVIHGCLHLLGYDHIEDDEAEEMEALERELLAELGHPDPYADDENDSITH</sequence>
<dbReference type="EC" id="3.1.-.-" evidence="1"/>
<dbReference type="EMBL" id="CP000949">
    <property type="protein sequence ID" value="ACA71137.1"/>
    <property type="molecule type" value="Genomic_DNA"/>
</dbReference>
<dbReference type="SMR" id="B1J201"/>
<dbReference type="STRING" id="390235.PputW619_0632"/>
<dbReference type="KEGG" id="ppw:PputW619_0632"/>
<dbReference type="eggNOG" id="COG0319">
    <property type="taxonomic scope" value="Bacteria"/>
</dbReference>
<dbReference type="HOGENOM" id="CLU_106710_0_1_6"/>
<dbReference type="OrthoDB" id="9807740at2"/>
<dbReference type="GO" id="GO:0005737">
    <property type="term" value="C:cytoplasm"/>
    <property type="evidence" value="ECO:0007669"/>
    <property type="project" value="UniProtKB-SubCell"/>
</dbReference>
<dbReference type="GO" id="GO:0004222">
    <property type="term" value="F:metalloendopeptidase activity"/>
    <property type="evidence" value="ECO:0007669"/>
    <property type="project" value="InterPro"/>
</dbReference>
<dbReference type="GO" id="GO:0004521">
    <property type="term" value="F:RNA endonuclease activity"/>
    <property type="evidence" value="ECO:0007669"/>
    <property type="project" value="UniProtKB-UniRule"/>
</dbReference>
<dbReference type="GO" id="GO:0008270">
    <property type="term" value="F:zinc ion binding"/>
    <property type="evidence" value="ECO:0007669"/>
    <property type="project" value="UniProtKB-UniRule"/>
</dbReference>
<dbReference type="GO" id="GO:0006364">
    <property type="term" value="P:rRNA processing"/>
    <property type="evidence" value="ECO:0007669"/>
    <property type="project" value="UniProtKB-UniRule"/>
</dbReference>
<dbReference type="Gene3D" id="3.40.390.30">
    <property type="entry name" value="Metalloproteases ('zincins'), catalytic domain"/>
    <property type="match status" value="1"/>
</dbReference>
<dbReference type="HAMAP" id="MF_00009">
    <property type="entry name" value="Endoribonucl_YbeY"/>
    <property type="match status" value="1"/>
</dbReference>
<dbReference type="InterPro" id="IPR023091">
    <property type="entry name" value="MetalPrtase_cat_dom_sf_prd"/>
</dbReference>
<dbReference type="InterPro" id="IPR002036">
    <property type="entry name" value="YbeY"/>
</dbReference>
<dbReference type="InterPro" id="IPR020549">
    <property type="entry name" value="YbeY_CS"/>
</dbReference>
<dbReference type="NCBIfam" id="TIGR00043">
    <property type="entry name" value="rRNA maturation RNase YbeY"/>
    <property type="match status" value="1"/>
</dbReference>
<dbReference type="PANTHER" id="PTHR46986">
    <property type="entry name" value="ENDORIBONUCLEASE YBEY, CHLOROPLASTIC"/>
    <property type="match status" value="1"/>
</dbReference>
<dbReference type="PANTHER" id="PTHR46986:SF1">
    <property type="entry name" value="ENDORIBONUCLEASE YBEY, CHLOROPLASTIC"/>
    <property type="match status" value="1"/>
</dbReference>
<dbReference type="Pfam" id="PF02130">
    <property type="entry name" value="YbeY"/>
    <property type="match status" value="1"/>
</dbReference>
<dbReference type="SUPFAM" id="SSF55486">
    <property type="entry name" value="Metalloproteases ('zincins'), catalytic domain"/>
    <property type="match status" value="1"/>
</dbReference>
<dbReference type="PROSITE" id="PS01306">
    <property type="entry name" value="UPF0054"/>
    <property type="match status" value="1"/>
</dbReference>
<accession>B1J201</accession>
<reference key="1">
    <citation type="submission" date="2008-02" db="EMBL/GenBank/DDBJ databases">
        <title>Complete sequence of Pseudomonas putida W619.</title>
        <authorList>
            <person name="Copeland A."/>
            <person name="Lucas S."/>
            <person name="Lapidus A."/>
            <person name="Barry K."/>
            <person name="Detter J.C."/>
            <person name="Glavina del Rio T."/>
            <person name="Dalin E."/>
            <person name="Tice H."/>
            <person name="Pitluck S."/>
            <person name="Chain P."/>
            <person name="Malfatti S."/>
            <person name="Shin M."/>
            <person name="Vergez L."/>
            <person name="Schmutz J."/>
            <person name="Larimer F."/>
            <person name="Land M."/>
            <person name="Hauser L."/>
            <person name="Kyrpides N."/>
            <person name="Kim E."/>
            <person name="Taghavi S."/>
            <person name="Vangronsveld D."/>
            <person name="van der Lelie D."/>
            <person name="Richardson P."/>
        </authorList>
    </citation>
    <scope>NUCLEOTIDE SEQUENCE [LARGE SCALE GENOMIC DNA]</scope>
    <source>
        <strain>W619</strain>
    </source>
</reference>
<keyword id="KW-0963">Cytoplasm</keyword>
<keyword id="KW-0255">Endonuclease</keyword>
<keyword id="KW-0378">Hydrolase</keyword>
<keyword id="KW-0479">Metal-binding</keyword>
<keyword id="KW-0540">Nuclease</keyword>
<keyword id="KW-0690">Ribosome biogenesis</keyword>
<keyword id="KW-0698">rRNA processing</keyword>
<keyword id="KW-0862">Zinc</keyword>
<proteinExistence type="inferred from homology"/>
<comment type="function">
    <text evidence="1">Single strand-specific metallo-endoribonuclease involved in late-stage 70S ribosome quality control and in maturation of the 3' terminus of the 16S rRNA.</text>
</comment>
<comment type="cofactor">
    <cofactor evidence="1">
        <name>Zn(2+)</name>
        <dbReference type="ChEBI" id="CHEBI:29105"/>
    </cofactor>
    <text evidence="1">Binds 1 zinc ion.</text>
</comment>
<comment type="subcellular location">
    <subcellularLocation>
        <location evidence="1">Cytoplasm</location>
    </subcellularLocation>
</comment>
<comment type="similarity">
    <text evidence="1">Belongs to the endoribonuclease YbeY family.</text>
</comment>
<evidence type="ECO:0000255" key="1">
    <source>
        <dbReference type="HAMAP-Rule" id="MF_00009"/>
    </source>
</evidence>
<gene>
    <name evidence="1" type="primary">ybeY</name>
    <name type="ordered locus">PputW619_0632</name>
</gene>